<organism>
    <name type="scientific">Maricaulis maris (strain MCS10)</name>
    <name type="common">Caulobacter maris</name>
    <dbReference type="NCBI Taxonomy" id="394221"/>
    <lineage>
        <taxon>Bacteria</taxon>
        <taxon>Pseudomonadati</taxon>
        <taxon>Pseudomonadota</taxon>
        <taxon>Alphaproteobacteria</taxon>
        <taxon>Maricaulales</taxon>
        <taxon>Maricaulaceae</taxon>
        <taxon>Maricaulis</taxon>
    </lineage>
</organism>
<feature type="chain" id="PRO_0000267786" description="Nucleoside diphosphate kinase">
    <location>
        <begin position="1"/>
        <end position="140"/>
    </location>
</feature>
<feature type="active site" description="Pros-phosphohistidine intermediate" evidence="1">
    <location>
        <position position="117"/>
    </location>
</feature>
<feature type="binding site" evidence="1">
    <location>
        <position position="11"/>
    </location>
    <ligand>
        <name>ATP</name>
        <dbReference type="ChEBI" id="CHEBI:30616"/>
    </ligand>
</feature>
<feature type="binding site" evidence="1">
    <location>
        <position position="59"/>
    </location>
    <ligand>
        <name>ATP</name>
        <dbReference type="ChEBI" id="CHEBI:30616"/>
    </ligand>
</feature>
<feature type="binding site" evidence="1">
    <location>
        <position position="87"/>
    </location>
    <ligand>
        <name>ATP</name>
        <dbReference type="ChEBI" id="CHEBI:30616"/>
    </ligand>
</feature>
<feature type="binding site" evidence="1">
    <location>
        <position position="93"/>
    </location>
    <ligand>
        <name>ATP</name>
        <dbReference type="ChEBI" id="CHEBI:30616"/>
    </ligand>
</feature>
<feature type="binding site" evidence="1">
    <location>
        <position position="104"/>
    </location>
    <ligand>
        <name>ATP</name>
        <dbReference type="ChEBI" id="CHEBI:30616"/>
    </ligand>
</feature>
<feature type="binding site" evidence="1">
    <location>
        <position position="114"/>
    </location>
    <ligand>
        <name>ATP</name>
        <dbReference type="ChEBI" id="CHEBI:30616"/>
    </ligand>
</feature>
<gene>
    <name evidence="1" type="primary">ndk</name>
    <name type="ordered locus">Mmar10_1234</name>
</gene>
<protein>
    <recommendedName>
        <fullName evidence="1">Nucleoside diphosphate kinase</fullName>
        <shortName evidence="1">NDK</shortName>
        <shortName evidence="1">NDP kinase</shortName>
        <ecNumber evidence="1">2.7.4.6</ecNumber>
    </recommendedName>
    <alternativeName>
        <fullName evidence="1">Nucleoside-2-P kinase</fullName>
    </alternativeName>
</protein>
<name>NDK_MARMM</name>
<reference key="1">
    <citation type="submission" date="2006-08" db="EMBL/GenBank/DDBJ databases">
        <title>Complete sequence of Maricaulis maris MCS10.</title>
        <authorList>
            <consortium name="US DOE Joint Genome Institute"/>
            <person name="Copeland A."/>
            <person name="Lucas S."/>
            <person name="Lapidus A."/>
            <person name="Barry K."/>
            <person name="Detter J.C."/>
            <person name="Glavina del Rio T."/>
            <person name="Hammon N."/>
            <person name="Israni S."/>
            <person name="Dalin E."/>
            <person name="Tice H."/>
            <person name="Pitluck S."/>
            <person name="Saunders E."/>
            <person name="Brettin T."/>
            <person name="Bruce D."/>
            <person name="Han C."/>
            <person name="Tapia R."/>
            <person name="Gilna P."/>
            <person name="Schmutz J."/>
            <person name="Larimer F."/>
            <person name="Land M."/>
            <person name="Hauser L."/>
            <person name="Kyrpides N."/>
            <person name="Mikhailova N."/>
            <person name="Viollier P."/>
            <person name="Stephens C."/>
            <person name="Richardson P."/>
        </authorList>
    </citation>
    <scope>NUCLEOTIDE SEQUENCE [LARGE SCALE GENOMIC DNA]</scope>
    <source>
        <strain>MCS10</strain>
    </source>
</reference>
<accession>Q0AQB0</accession>
<dbReference type="EC" id="2.7.4.6" evidence="1"/>
<dbReference type="EMBL" id="CP000449">
    <property type="protein sequence ID" value="ABI65527.1"/>
    <property type="molecule type" value="Genomic_DNA"/>
</dbReference>
<dbReference type="RefSeq" id="WP_011643174.1">
    <property type="nucleotide sequence ID" value="NC_008347.1"/>
</dbReference>
<dbReference type="SMR" id="Q0AQB0"/>
<dbReference type="STRING" id="394221.Mmar10_1234"/>
<dbReference type="KEGG" id="mmr:Mmar10_1234"/>
<dbReference type="eggNOG" id="COG0105">
    <property type="taxonomic scope" value="Bacteria"/>
</dbReference>
<dbReference type="HOGENOM" id="CLU_060216_8_1_5"/>
<dbReference type="OrthoDB" id="9801161at2"/>
<dbReference type="Proteomes" id="UP000001964">
    <property type="component" value="Chromosome"/>
</dbReference>
<dbReference type="GO" id="GO:0005737">
    <property type="term" value="C:cytoplasm"/>
    <property type="evidence" value="ECO:0007669"/>
    <property type="project" value="UniProtKB-SubCell"/>
</dbReference>
<dbReference type="GO" id="GO:0005524">
    <property type="term" value="F:ATP binding"/>
    <property type="evidence" value="ECO:0007669"/>
    <property type="project" value="UniProtKB-UniRule"/>
</dbReference>
<dbReference type="GO" id="GO:0046872">
    <property type="term" value="F:metal ion binding"/>
    <property type="evidence" value="ECO:0007669"/>
    <property type="project" value="UniProtKB-KW"/>
</dbReference>
<dbReference type="GO" id="GO:0004550">
    <property type="term" value="F:nucleoside diphosphate kinase activity"/>
    <property type="evidence" value="ECO:0007669"/>
    <property type="project" value="UniProtKB-UniRule"/>
</dbReference>
<dbReference type="GO" id="GO:0006241">
    <property type="term" value="P:CTP biosynthetic process"/>
    <property type="evidence" value="ECO:0007669"/>
    <property type="project" value="UniProtKB-UniRule"/>
</dbReference>
<dbReference type="GO" id="GO:0006183">
    <property type="term" value="P:GTP biosynthetic process"/>
    <property type="evidence" value="ECO:0007669"/>
    <property type="project" value="UniProtKB-UniRule"/>
</dbReference>
<dbReference type="GO" id="GO:0006228">
    <property type="term" value="P:UTP biosynthetic process"/>
    <property type="evidence" value="ECO:0007669"/>
    <property type="project" value="UniProtKB-UniRule"/>
</dbReference>
<dbReference type="CDD" id="cd04413">
    <property type="entry name" value="NDPk_I"/>
    <property type="match status" value="1"/>
</dbReference>
<dbReference type="FunFam" id="3.30.70.141:FF:000001">
    <property type="entry name" value="Nucleoside diphosphate kinase"/>
    <property type="match status" value="1"/>
</dbReference>
<dbReference type="Gene3D" id="3.30.70.141">
    <property type="entry name" value="Nucleoside diphosphate kinase-like domain"/>
    <property type="match status" value="1"/>
</dbReference>
<dbReference type="HAMAP" id="MF_00451">
    <property type="entry name" value="NDP_kinase"/>
    <property type="match status" value="1"/>
</dbReference>
<dbReference type="InterPro" id="IPR034907">
    <property type="entry name" value="NDK-like_dom"/>
</dbReference>
<dbReference type="InterPro" id="IPR036850">
    <property type="entry name" value="NDK-like_dom_sf"/>
</dbReference>
<dbReference type="InterPro" id="IPR001564">
    <property type="entry name" value="Nucleoside_diP_kinase"/>
</dbReference>
<dbReference type="InterPro" id="IPR023005">
    <property type="entry name" value="Nucleoside_diP_kinase_AS"/>
</dbReference>
<dbReference type="NCBIfam" id="NF001908">
    <property type="entry name" value="PRK00668.1"/>
    <property type="match status" value="1"/>
</dbReference>
<dbReference type="PANTHER" id="PTHR46161">
    <property type="entry name" value="NUCLEOSIDE DIPHOSPHATE KINASE"/>
    <property type="match status" value="1"/>
</dbReference>
<dbReference type="PANTHER" id="PTHR46161:SF3">
    <property type="entry name" value="NUCLEOSIDE DIPHOSPHATE KINASE DDB_G0292928-RELATED"/>
    <property type="match status" value="1"/>
</dbReference>
<dbReference type="Pfam" id="PF00334">
    <property type="entry name" value="NDK"/>
    <property type="match status" value="1"/>
</dbReference>
<dbReference type="PRINTS" id="PR01243">
    <property type="entry name" value="NUCDPKINASE"/>
</dbReference>
<dbReference type="SMART" id="SM00562">
    <property type="entry name" value="NDK"/>
    <property type="match status" value="1"/>
</dbReference>
<dbReference type="SUPFAM" id="SSF54919">
    <property type="entry name" value="Nucleoside diphosphate kinase, NDK"/>
    <property type="match status" value="1"/>
</dbReference>
<dbReference type="PROSITE" id="PS00469">
    <property type="entry name" value="NDPK"/>
    <property type="match status" value="1"/>
</dbReference>
<dbReference type="PROSITE" id="PS51374">
    <property type="entry name" value="NDPK_LIKE"/>
    <property type="match status" value="1"/>
</dbReference>
<keyword id="KW-0067">ATP-binding</keyword>
<keyword id="KW-0963">Cytoplasm</keyword>
<keyword id="KW-0418">Kinase</keyword>
<keyword id="KW-0460">Magnesium</keyword>
<keyword id="KW-0479">Metal-binding</keyword>
<keyword id="KW-0546">Nucleotide metabolism</keyword>
<keyword id="KW-0547">Nucleotide-binding</keyword>
<keyword id="KW-0597">Phosphoprotein</keyword>
<keyword id="KW-1185">Reference proteome</keyword>
<keyword id="KW-0808">Transferase</keyword>
<sequence>MAIQRTFSIIKPDATARNLTGAINAKIEAAGLRIIAQKRIRLSREQAEGFYGVHKERPFFNDLVTFMISGPVVVQVLEGEDAIAKYRTVMGATNPEQADAGTIRKDFAESIEANSVHGSDAPETAAEEIPFFFSDDEIVG</sequence>
<proteinExistence type="inferred from homology"/>
<evidence type="ECO:0000255" key="1">
    <source>
        <dbReference type="HAMAP-Rule" id="MF_00451"/>
    </source>
</evidence>
<comment type="function">
    <text evidence="1">Major role in the synthesis of nucleoside triphosphates other than ATP. The ATP gamma phosphate is transferred to the NDP beta phosphate via a ping-pong mechanism, using a phosphorylated active-site intermediate.</text>
</comment>
<comment type="catalytic activity">
    <reaction evidence="1">
        <text>a 2'-deoxyribonucleoside 5'-diphosphate + ATP = a 2'-deoxyribonucleoside 5'-triphosphate + ADP</text>
        <dbReference type="Rhea" id="RHEA:44640"/>
        <dbReference type="ChEBI" id="CHEBI:30616"/>
        <dbReference type="ChEBI" id="CHEBI:61560"/>
        <dbReference type="ChEBI" id="CHEBI:73316"/>
        <dbReference type="ChEBI" id="CHEBI:456216"/>
        <dbReference type="EC" id="2.7.4.6"/>
    </reaction>
</comment>
<comment type="catalytic activity">
    <reaction evidence="1">
        <text>a ribonucleoside 5'-diphosphate + ATP = a ribonucleoside 5'-triphosphate + ADP</text>
        <dbReference type="Rhea" id="RHEA:18113"/>
        <dbReference type="ChEBI" id="CHEBI:30616"/>
        <dbReference type="ChEBI" id="CHEBI:57930"/>
        <dbReference type="ChEBI" id="CHEBI:61557"/>
        <dbReference type="ChEBI" id="CHEBI:456216"/>
        <dbReference type="EC" id="2.7.4.6"/>
    </reaction>
</comment>
<comment type="cofactor">
    <cofactor evidence="1">
        <name>Mg(2+)</name>
        <dbReference type="ChEBI" id="CHEBI:18420"/>
    </cofactor>
</comment>
<comment type="subunit">
    <text evidence="1">Homotetramer.</text>
</comment>
<comment type="subcellular location">
    <subcellularLocation>
        <location evidence="1">Cytoplasm</location>
    </subcellularLocation>
</comment>
<comment type="similarity">
    <text evidence="1">Belongs to the NDK family.</text>
</comment>